<gene>
    <name evidence="1" type="primary">cysG</name>
    <name type="ordered locus">SeHA_C3784</name>
</gene>
<dbReference type="EC" id="2.1.1.107" evidence="1"/>
<dbReference type="EC" id="1.3.1.76" evidence="1"/>
<dbReference type="EC" id="4.99.1.4" evidence="1"/>
<dbReference type="EMBL" id="CP001120">
    <property type="protein sequence ID" value="ACF67756.1"/>
    <property type="molecule type" value="Genomic_DNA"/>
</dbReference>
<dbReference type="RefSeq" id="WP_000349886.1">
    <property type="nucleotide sequence ID" value="NC_011083.1"/>
</dbReference>
<dbReference type="SMR" id="B4TKQ4"/>
<dbReference type="KEGG" id="seh:SeHA_C3784"/>
<dbReference type="HOGENOM" id="CLU_011276_2_0_6"/>
<dbReference type="UniPathway" id="UPA00148">
    <property type="reaction ID" value="UER00211"/>
</dbReference>
<dbReference type="UniPathway" id="UPA00148">
    <property type="reaction ID" value="UER00222"/>
</dbReference>
<dbReference type="UniPathway" id="UPA00262">
    <property type="reaction ID" value="UER00211"/>
</dbReference>
<dbReference type="UniPathway" id="UPA00262">
    <property type="reaction ID" value="UER00222"/>
</dbReference>
<dbReference type="UniPathway" id="UPA00262">
    <property type="reaction ID" value="UER00376"/>
</dbReference>
<dbReference type="Proteomes" id="UP000001866">
    <property type="component" value="Chromosome"/>
</dbReference>
<dbReference type="GO" id="GO:0051287">
    <property type="term" value="F:NAD binding"/>
    <property type="evidence" value="ECO:0007669"/>
    <property type="project" value="InterPro"/>
</dbReference>
<dbReference type="GO" id="GO:0043115">
    <property type="term" value="F:precorrin-2 dehydrogenase activity"/>
    <property type="evidence" value="ECO:0007669"/>
    <property type="project" value="UniProtKB-UniRule"/>
</dbReference>
<dbReference type="GO" id="GO:0051266">
    <property type="term" value="F:sirohydrochlorin ferrochelatase activity"/>
    <property type="evidence" value="ECO:0007669"/>
    <property type="project" value="UniProtKB-EC"/>
</dbReference>
<dbReference type="GO" id="GO:0004851">
    <property type="term" value="F:uroporphyrin-III C-methyltransferase activity"/>
    <property type="evidence" value="ECO:0007669"/>
    <property type="project" value="UniProtKB-UniRule"/>
</dbReference>
<dbReference type="GO" id="GO:0009236">
    <property type="term" value="P:cobalamin biosynthetic process"/>
    <property type="evidence" value="ECO:0007669"/>
    <property type="project" value="UniProtKB-UniRule"/>
</dbReference>
<dbReference type="GO" id="GO:0032259">
    <property type="term" value="P:methylation"/>
    <property type="evidence" value="ECO:0007669"/>
    <property type="project" value="UniProtKB-KW"/>
</dbReference>
<dbReference type="GO" id="GO:0019354">
    <property type="term" value="P:siroheme biosynthetic process"/>
    <property type="evidence" value="ECO:0007669"/>
    <property type="project" value="UniProtKB-UniRule"/>
</dbReference>
<dbReference type="CDD" id="cd11642">
    <property type="entry name" value="SUMT"/>
    <property type="match status" value="1"/>
</dbReference>
<dbReference type="FunFam" id="1.10.8.210:FF:000001">
    <property type="entry name" value="Siroheme synthase"/>
    <property type="match status" value="1"/>
</dbReference>
<dbReference type="FunFam" id="3.30.160.110:FF:000001">
    <property type="entry name" value="Siroheme synthase"/>
    <property type="match status" value="1"/>
</dbReference>
<dbReference type="FunFam" id="3.30.950.10:FF:000001">
    <property type="entry name" value="Siroheme synthase"/>
    <property type="match status" value="1"/>
</dbReference>
<dbReference type="FunFam" id="3.40.1010.10:FF:000001">
    <property type="entry name" value="Siroheme synthase"/>
    <property type="match status" value="1"/>
</dbReference>
<dbReference type="FunFam" id="3.40.50.720:FF:000092">
    <property type="entry name" value="Siroheme synthase"/>
    <property type="match status" value="1"/>
</dbReference>
<dbReference type="Gene3D" id="3.40.1010.10">
    <property type="entry name" value="Cobalt-precorrin-4 Transmethylase, Domain 1"/>
    <property type="match status" value="1"/>
</dbReference>
<dbReference type="Gene3D" id="3.30.950.10">
    <property type="entry name" value="Methyltransferase, Cobalt-precorrin-4 Transmethylase, Domain 2"/>
    <property type="match status" value="1"/>
</dbReference>
<dbReference type="Gene3D" id="3.40.50.720">
    <property type="entry name" value="NAD(P)-binding Rossmann-like Domain"/>
    <property type="match status" value="1"/>
</dbReference>
<dbReference type="Gene3D" id="1.10.8.210">
    <property type="entry name" value="Sirohaem synthase, dimerisation domain"/>
    <property type="match status" value="1"/>
</dbReference>
<dbReference type="Gene3D" id="3.30.160.110">
    <property type="entry name" value="Siroheme synthase, domain 2"/>
    <property type="match status" value="1"/>
</dbReference>
<dbReference type="HAMAP" id="MF_01646">
    <property type="entry name" value="Siroheme_synth"/>
    <property type="match status" value="1"/>
</dbReference>
<dbReference type="InterPro" id="IPR000878">
    <property type="entry name" value="4pyrrol_Mease"/>
</dbReference>
<dbReference type="InterPro" id="IPR035996">
    <property type="entry name" value="4pyrrol_Methylase_sf"/>
</dbReference>
<dbReference type="InterPro" id="IPR014777">
    <property type="entry name" value="4pyrrole_Mease_sub1"/>
</dbReference>
<dbReference type="InterPro" id="IPR014776">
    <property type="entry name" value="4pyrrole_Mease_sub2"/>
</dbReference>
<dbReference type="InterPro" id="IPR006366">
    <property type="entry name" value="CobA/CysG_C"/>
</dbReference>
<dbReference type="InterPro" id="IPR036291">
    <property type="entry name" value="NAD(P)-bd_dom_sf"/>
</dbReference>
<dbReference type="InterPro" id="IPR050161">
    <property type="entry name" value="Siro_Cobalamin_biosynth"/>
</dbReference>
<dbReference type="InterPro" id="IPR037115">
    <property type="entry name" value="Sirohaem_synt_dimer_dom_sf"/>
</dbReference>
<dbReference type="InterPro" id="IPR012409">
    <property type="entry name" value="Sirohaem_synth"/>
</dbReference>
<dbReference type="InterPro" id="IPR028281">
    <property type="entry name" value="Sirohaem_synthase_central"/>
</dbReference>
<dbReference type="InterPro" id="IPR019478">
    <property type="entry name" value="Sirohaem_synthase_dimer_dom"/>
</dbReference>
<dbReference type="InterPro" id="IPR006367">
    <property type="entry name" value="Sirohaem_synthase_N"/>
</dbReference>
<dbReference type="InterPro" id="IPR003043">
    <property type="entry name" value="Uropor_MeTrfase_CS"/>
</dbReference>
<dbReference type="NCBIfam" id="TIGR01469">
    <property type="entry name" value="cobA_cysG_Cterm"/>
    <property type="match status" value="1"/>
</dbReference>
<dbReference type="NCBIfam" id="TIGR01470">
    <property type="entry name" value="cysG_Nterm"/>
    <property type="match status" value="1"/>
</dbReference>
<dbReference type="NCBIfam" id="NF004790">
    <property type="entry name" value="PRK06136.1"/>
    <property type="match status" value="1"/>
</dbReference>
<dbReference type="NCBIfam" id="NF007922">
    <property type="entry name" value="PRK10637.1"/>
    <property type="match status" value="1"/>
</dbReference>
<dbReference type="PANTHER" id="PTHR45790:SF1">
    <property type="entry name" value="SIROHEME SYNTHASE"/>
    <property type="match status" value="1"/>
</dbReference>
<dbReference type="PANTHER" id="PTHR45790">
    <property type="entry name" value="SIROHEME SYNTHASE-RELATED"/>
    <property type="match status" value="1"/>
</dbReference>
<dbReference type="Pfam" id="PF10414">
    <property type="entry name" value="CysG_dimeriser"/>
    <property type="match status" value="1"/>
</dbReference>
<dbReference type="Pfam" id="PF13241">
    <property type="entry name" value="NAD_binding_7"/>
    <property type="match status" value="1"/>
</dbReference>
<dbReference type="Pfam" id="PF14824">
    <property type="entry name" value="Sirohm_synth_M"/>
    <property type="match status" value="1"/>
</dbReference>
<dbReference type="Pfam" id="PF00590">
    <property type="entry name" value="TP_methylase"/>
    <property type="match status" value="1"/>
</dbReference>
<dbReference type="PIRSF" id="PIRSF036426">
    <property type="entry name" value="Sirohaem_synth"/>
    <property type="match status" value="1"/>
</dbReference>
<dbReference type="SUPFAM" id="SSF51735">
    <property type="entry name" value="NAD(P)-binding Rossmann-fold domains"/>
    <property type="match status" value="1"/>
</dbReference>
<dbReference type="SUPFAM" id="SSF75615">
    <property type="entry name" value="Siroheme synthase middle domains-like"/>
    <property type="match status" value="1"/>
</dbReference>
<dbReference type="SUPFAM" id="SSF53790">
    <property type="entry name" value="Tetrapyrrole methylase"/>
    <property type="match status" value="1"/>
</dbReference>
<dbReference type="PROSITE" id="PS00839">
    <property type="entry name" value="SUMT_1"/>
    <property type="match status" value="1"/>
</dbReference>
<dbReference type="PROSITE" id="PS00840">
    <property type="entry name" value="SUMT_2"/>
    <property type="match status" value="1"/>
</dbReference>
<reference key="1">
    <citation type="journal article" date="2011" name="J. Bacteriol.">
        <title>Comparative genomics of 28 Salmonella enterica isolates: evidence for CRISPR-mediated adaptive sublineage evolution.</title>
        <authorList>
            <person name="Fricke W.F."/>
            <person name="Mammel M.K."/>
            <person name="McDermott P.F."/>
            <person name="Tartera C."/>
            <person name="White D.G."/>
            <person name="Leclerc J.E."/>
            <person name="Ravel J."/>
            <person name="Cebula T.A."/>
        </authorList>
    </citation>
    <scope>NUCLEOTIDE SEQUENCE [LARGE SCALE GENOMIC DNA]</scope>
    <source>
        <strain>SL476</strain>
    </source>
</reference>
<organism>
    <name type="scientific">Salmonella heidelberg (strain SL476)</name>
    <dbReference type="NCBI Taxonomy" id="454169"/>
    <lineage>
        <taxon>Bacteria</taxon>
        <taxon>Pseudomonadati</taxon>
        <taxon>Pseudomonadota</taxon>
        <taxon>Gammaproteobacteria</taxon>
        <taxon>Enterobacterales</taxon>
        <taxon>Enterobacteriaceae</taxon>
        <taxon>Salmonella</taxon>
    </lineage>
</organism>
<feature type="chain" id="PRO_1000186954" description="Siroheme synthase">
    <location>
        <begin position="1"/>
        <end position="457"/>
    </location>
</feature>
<feature type="region of interest" description="Precorrin-2 dehydrogenase /sirohydrochlorin ferrochelatase" evidence="1">
    <location>
        <begin position="1"/>
        <end position="204"/>
    </location>
</feature>
<feature type="region of interest" description="Uroporphyrinogen-III C-methyltransferase" evidence="1">
    <location>
        <begin position="216"/>
        <end position="457"/>
    </location>
</feature>
<feature type="active site" description="Proton acceptor" evidence="1">
    <location>
        <position position="248"/>
    </location>
</feature>
<feature type="active site" description="Proton donor" evidence="1">
    <location>
        <position position="270"/>
    </location>
</feature>
<feature type="binding site" evidence="1">
    <location>
        <begin position="22"/>
        <end position="23"/>
    </location>
    <ligand>
        <name>NAD(+)</name>
        <dbReference type="ChEBI" id="CHEBI:57540"/>
    </ligand>
</feature>
<feature type="binding site" evidence="1">
    <location>
        <begin position="43"/>
        <end position="44"/>
    </location>
    <ligand>
        <name>NAD(+)</name>
        <dbReference type="ChEBI" id="CHEBI:57540"/>
    </ligand>
</feature>
<feature type="binding site" evidence="1">
    <location>
        <position position="225"/>
    </location>
    <ligand>
        <name>S-adenosyl-L-methionine</name>
        <dbReference type="ChEBI" id="CHEBI:59789"/>
    </ligand>
</feature>
<feature type="binding site" evidence="1">
    <location>
        <begin position="301"/>
        <end position="303"/>
    </location>
    <ligand>
        <name>S-adenosyl-L-methionine</name>
        <dbReference type="ChEBI" id="CHEBI:59789"/>
    </ligand>
</feature>
<feature type="binding site" evidence="1">
    <location>
        <position position="306"/>
    </location>
    <ligand>
        <name>S-adenosyl-L-methionine</name>
        <dbReference type="ChEBI" id="CHEBI:59789"/>
    </ligand>
</feature>
<feature type="binding site" evidence="1">
    <location>
        <begin position="331"/>
        <end position="332"/>
    </location>
    <ligand>
        <name>S-adenosyl-L-methionine</name>
        <dbReference type="ChEBI" id="CHEBI:59789"/>
    </ligand>
</feature>
<feature type="binding site" evidence="1">
    <location>
        <position position="382"/>
    </location>
    <ligand>
        <name>S-adenosyl-L-methionine</name>
        <dbReference type="ChEBI" id="CHEBI:59789"/>
    </ligand>
</feature>
<feature type="binding site" evidence="1">
    <location>
        <position position="411"/>
    </location>
    <ligand>
        <name>S-adenosyl-L-methionine</name>
        <dbReference type="ChEBI" id="CHEBI:59789"/>
    </ligand>
</feature>
<feature type="modified residue" description="Phosphoserine" evidence="1">
    <location>
        <position position="128"/>
    </location>
</feature>
<evidence type="ECO:0000255" key="1">
    <source>
        <dbReference type="HAMAP-Rule" id="MF_01646"/>
    </source>
</evidence>
<name>CYSG_SALHS</name>
<sequence length="457" mass="50173">MDHLPIFCQLRDRDCLIVGGGDVAERKARLLLEAGARLTINALTFIPQFTVWANEGMLTLVEGPFDETLLDSCWLAIAATDDDTVNQRVSDAAESRRIFCNVVDAPKAASFIMPSIIDRSPLMVAVSSGGTSPVLARLLREKLESLLPQHLGQVARYAGQLRARVKKQFATMGERRRFWEKFFVNDRLAQSLANADEKAVNATTERLFSEPLDHRGEVVLVGAGPGDAGLLTLKGLQQIQQADIVVYDRLVSDDIMNLVRRDADRVFVGKRAGYHCVPQEEINQILLREAQKGKRVVRLKGGDPFIFGRGGEELETLCHAGIPFSVVPGITAASGCSAYSGIPLTHRDYAQSVRLVTGHLKTGGELDWENLAAEKQTLVFYMGLNQAATIQEKLIAFGMQADMPVALVENGTSVKQRVVHGVLTQLGELAQQVESPALIIVGRVVGLRDKLNWFSNY</sequence>
<comment type="function">
    <text evidence="1">Multifunctional enzyme that catalyzes the SAM-dependent methylations of uroporphyrinogen III at position C-2 and C-7 to form precorrin-2 via precorrin-1. Then it catalyzes the NAD-dependent ring dehydrogenation of precorrin-2 to yield sirohydrochlorin. Finally, it catalyzes the ferrochelation of sirohydrochlorin to yield siroheme.</text>
</comment>
<comment type="catalytic activity">
    <reaction evidence="1">
        <text>uroporphyrinogen III + 2 S-adenosyl-L-methionine = precorrin-2 + 2 S-adenosyl-L-homocysteine + H(+)</text>
        <dbReference type="Rhea" id="RHEA:32459"/>
        <dbReference type="ChEBI" id="CHEBI:15378"/>
        <dbReference type="ChEBI" id="CHEBI:57308"/>
        <dbReference type="ChEBI" id="CHEBI:57856"/>
        <dbReference type="ChEBI" id="CHEBI:58827"/>
        <dbReference type="ChEBI" id="CHEBI:59789"/>
        <dbReference type="EC" id="2.1.1.107"/>
    </reaction>
</comment>
<comment type="catalytic activity">
    <reaction evidence="1">
        <text>precorrin-2 + NAD(+) = sirohydrochlorin + NADH + 2 H(+)</text>
        <dbReference type="Rhea" id="RHEA:15613"/>
        <dbReference type="ChEBI" id="CHEBI:15378"/>
        <dbReference type="ChEBI" id="CHEBI:57540"/>
        <dbReference type="ChEBI" id="CHEBI:57945"/>
        <dbReference type="ChEBI" id="CHEBI:58351"/>
        <dbReference type="ChEBI" id="CHEBI:58827"/>
        <dbReference type="EC" id="1.3.1.76"/>
    </reaction>
</comment>
<comment type="catalytic activity">
    <reaction evidence="1">
        <text>siroheme + 2 H(+) = sirohydrochlorin + Fe(2+)</text>
        <dbReference type="Rhea" id="RHEA:24360"/>
        <dbReference type="ChEBI" id="CHEBI:15378"/>
        <dbReference type="ChEBI" id="CHEBI:29033"/>
        <dbReference type="ChEBI" id="CHEBI:58351"/>
        <dbReference type="ChEBI" id="CHEBI:60052"/>
        <dbReference type="EC" id="4.99.1.4"/>
    </reaction>
</comment>
<comment type="pathway">
    <text evidence="1">Cofactor biosynthesis; adenosylcobalamin biosynthesis; precorrin-2 from uroporphyrinogen III: step 1/1.</text>
</comment>
<comment type="pathway">
    <text evidence="1">Cofactor biosynthesis; adenosylcobalamin biosynthesis; sirohydrochlorin from precorrin-2: step 1/1.</text>
</comment>
<comment type="pathway">
    <text evidence="1">Porphyrin-containing compound metabolism; siroheme biosynthesis; precorrin-2 from uroporphyrinogen III: step 1/1.</text>
</comment>
<comment type="pathway">
    <text evidence="1">Porphyrin-containing compound metabolism; siroheme biosynthesis; siroheme from sirohydrochlorin: step 1/1.</text>
</comment>
<comment type="pathway">
    <text evidence="1">Porphyrin-containing compound metabolism; siroheme biosynthesis; sirohydrochlorin from precorrin-2: step 1/1.</text>
</comment>
<comment type="similarity">
    <text evidence="1">In the N-terminal section; belongs to the precorrin-2 dehydrogenase / sirohydrochlorin ferrochelatase family.</text>
</comment>
<comment type="similarity">
    <text evidence="1">In the C-terminal section; belongs to the precorrin methyltransferase family.</text>
</comment>
<proteinExistence type="inferred from homology"/>
<protein>
    <recommendedName>
        <fullName evidence="1">Siroheme synthase</fullName>
    </recommendedName>
    <domain>
        <recommendedName>
            <fullName evidence="1">Uroporphyrinogen-III C-methyltransferase</fullName>
            <shortName evidence="1">Urogen III methylase</shortName>
            <ecNumber evidence="1">2.1.1.107</ecNumber>
        </recommendedName>
        <alternativeName>
            <fullName evidence="1">SUMT</fullName>
        </alternativeName>
        <alternativeName>
            <fullName evidence="1">Uroporphyrinogen III methylase</fullName>
            <shortName evidence="1">UROM</shortName>
        </alternativeName>
    </domain>
    <domain>
        <recommendedName>
            <fullName evidence="1">Precorrin-2 dehydrogenase</fullName>
            <ecNumber evidence="1">1.3.1.76</ecNumber>
        </recommendedName>
    </domain>
    <domain>
        <recommendedName>
            <fullName evidence="1">Sirohydrochlorin ferrochelatase</fullName>
            <ecNumber evidence="1">4.99.1.4</ecNumber>
        </recommendedName>
    </domain>
</protein>
<keyword id="KW-0169">Cobalamin biosynthesis</keyword>
<keyword id="KW-0456">Lyase</keyword>
<keyword id="KW-0489">Methyltransferase</keyword>
<keyword id="KW-0511">Multifunctional enzyme</keyword>
<keyword id="KW-0520">NAD</keyword>
<keyword id="KW-0560">Oxidoreductase</keyword>
<keyword id="KW-0597">Phosphoprotein</keyword>
<keyword id="KW-0627">Porphyrin biosynthesis</keyword>
<keyword id="KW-0949">S-adenosyl-L-methionine</keyword>
<keyword id="KW-0808">Transferase</keyword>
<accession>B4TKQ4</accession>